<feature type="chain" id="PRO_0000146888" description="Adenosylcobinamide-GDP ribazoletransferase">
    <location>
        <begin position="1"/>
        <end position="262"/>
    </location>
</feature>
<feature type="transmembrane region" description="Helical" evidence="2">
    <location>
        <begin position="41"/>
        <end position="63"/>
    </location>
</feature>
<feature type="transmembrane region" description="Helical" evidence="2">
    <location>
        <begin position="68"/>
        <end position="85"/>
    </location>
</feature>
<feature type="transmembrane region" description="Helical" evidence="2">
    <location>
        <begin position="115"/>
        <end position="134"/>
    </location>
</feature>
<feature type="transmembrane region" description="Helical" evidence="2">
    <location>
        <begin position="141"/>
        <end position="163"/>
    </location>
</feature>
<feature type="transmembrane region" description="Helical" evidence="2">
    <location>
        <begin position="201"/>
        <end position="221"/>
    </location>
</feature>
<accession>P29936</accession>
<organism>
    <name type="scientific">Sinorhizobium sp</name>
    <dbReference type="NCBI Taxonomy" id="42445"/>
    <lineage>
        <taxon>Bacteria</taxon>
        <taxon>Pseudomonadati</taxon>
        <taxon>Pseudomonadota</taxon>
        <taxon>Alphaproteobacteria</taxon>
        <taxon>Hyphomicrobiales</taxon>
        <taxon>Rhizobiaceae</taxon>
        <taxon>Sinorhizobium/Ensifer group</taxon>
        <taxon>Sinorhizobium</taxon>
    </lineage>
</organism>
<comment type="function">
    <text evidence="3">Joins adenosylcobinamide-GDP and alpha-ribazole to generate adenosylcobalamin (Ado-cobalamin). Also synthesizes adenosylcobalamin 5'-phosphate from adenosylcobinamide-GDP and alpha-ribazole 5'-phosphate.</text>
</comment>
<comment type="catalytic activity">
    <reaction evidence="3">
        <text>alpha-ribazole + adenosylcob(III)inamide-GDP = adenosylcob(III)alamin + GMP + H(+)</text>
        <dbReference type="Rhea" id="RHEA:16049"/>
        <dbReference type="ChEBI" id="CHEBI:10329"/>
        <dbReference type="ChEBI" id="CHEBI:15378"/>
        <dbReference type="ChEBI" id="CHEBI:18408"/>
        <dbReference type="ChEBI" id="CHEBI:58115"/>
        <dbReference type="ChEBI" id="CHEBI:60487"/>
        <dbReference type="EC" id="2.7.8.26"/>
    </reaction>
</comment>
<comment type="catalytic activity">
    <reaction evidence="3">
        <text>alpha-ribazole 5'-phosphate + adenosylcob(III)inamide-GDP = adenosylcob(III)alamin 5'-phosphate + GMP + H(+)</text>
        <dbReference type="Rhea" id="RHEA:23560"/>
        <dbReference type="ChEBI" id="CHEBI:15378"/>
        <dbReference type="ChEBI" id="CHEBI:57918"/>
        <dbReference type="ChEBI" id="CHEBI:58115"/>
        <dbReference type="ChEBI" id="CHEBI:60487"/>
        <dbReference type="ChEBI" id="CHEBI:60493"/>
        <dbReference type="EC" id="2.7.8.26"/>
    </reaction>
</comment>
<comment type="cofactor">
    <cofactor evidence="3">
        <name>Mg(2+)</name>
        <dbReference type="ChEBI" id="CHEBI:18420"/>
    </cofactor>
</comment>
<comment type="biophysicochemical properties">
    <kinetics>
        <KM evidence="3">2.7 uM for alpha-ribazole 5'-phosphate</KM>
        <KM evidence="3">0.9 uM for adenosylcobinamide-GDP</KM>
        <KM evidence="3">7.8 uM for alpha-ribazole</KM>
    </kinetics>
</comment>
<comment type="pathway">
    <text>Cofactor biosynthesis; adenosylcobalamin biosynthesis; adenosylcobalamin from cob(II)yrinate a,c-diamide: step 7/7.</text>
</comment>
<comment type="subunit">
    <text>Associated with a large complex of proteins.</text>
</comment>
<comment type="subcellular location">
    <subcellularLocation>
        <location evidence="1">Cell inner membrane</location>
        <topology evidence="1">Multi-pass membrane protein</topology>
    </subcellularLocation>
</comment>
<comment type="similarity">
    <text evidence="4">Belongs to the CobS family.</text>
</comment>
<comment type="caution">
    <text evidence="4">Was originally thought to originate from Pseudomonas denitrificans, but similarity searches show that the sequence is much closer to Sinorhizobium. The entry's taxonomy has been changed.</text>
</comment>
<comment type="sequence caution" evidence="4">
    <conflict type="erroneous initiation">
        <sequence resource="EMBL-CDS" id="AAA25787"/>
    </conflict>
    <text>Extended N-terminus.</text>
</comment>
<evidence type="ECO:0000250" key="1"/>
<evidence type="ECO:0000255" key="2"/>
<evidence type="ECO:0000269" key="3">
    <source>
    </source>
</evidence>
<evidence type="ECO:0000305" key="4"/>
<name>COBV_SINSX</name>
<proteinExistence type="evidence at protein level"/>
<sequence length="262" mass="26842">MGFVGDFCDDVARSIGFLSRIPMPARHFEGYDGRLSRAVRAFPFAGLAIALPSAAVAMALMALQVSSLFAAFVVVAIQALVTGALHEDGLGDTADGFGGGRDREAALAIMKDSRIGTYAAVALILSFGLRVSAFASILPLFSPLGAAMAILGAACLSRAAMVWHWSSLPPARSSGVAASAGEPEPAATRFALAFGLLVAMLLFYLAQVPALGVIAALVAFLATVKGFARLAMRKIGGQTGDTIGATQQLTEIAVLGALALTV</sequence>
<dbReference type="EC" id="2.7.8.26"/>
<dbReference type="EMBL" id="M62868">
    <property type="protein sequence ID" value="AAA25787.1"/>
    <property type="status" value="ALT_INIT"/>
    <property type="molecule type" value="Genomic_DNA"/>
</dbReference>
<dbReference type="BioCyc" id="MetaCyc:MONOMER-144"/>
<dbReference type="SABIO-RK" id="P29936"/>
<dbReference type="UniPathway" id="UPA00148">
    <property type="reaction ID" value="UER00238"/>
</dbReference>
<dbReference type="GO" id="GO:0005886">
    <property type="term" value="C:plasma membrane"/>
    <property type="evidence" value="ECO:0007669"/>
    <property type="project" value="UniProtKB-SubCell"/>
</dbReference>
<dbReference type="GO" id="GO:0051073">
    <property type="term" value="F:adenosylcobinamide-GDP ribazoletransferase activity"/>
    <property type="evidence" value="ECO:0007669"/>
    <property type="project" value="UniProtKB-UniRule"/>
</dbReference>
<dbReference type="GO" id="GO:0008818">
    <property type="term" value="F:cobalamin 5'-phosphate synthase activity"/>
    <property type="evidence" value="ECO:0007669"/>
    <property type="project" value="UniProtKB-UniRule"/>
</dbReference>
<dbReference type="GO" id="GO:0009236">
    <property type="term" value="P:cobalamin biosynthetic process"/>
    <property type="evidence" value="ECO:0007669"/>
    <property type="project" value="UniProtKB-UniRule"/>
</dbReference>
<dbReference type="HAMAP" id="MF_00719">
    <property type="entry name" value="CobS"/>
    <property type="match status" value="1"/>
</dbReference>
<dbReference type="InterPro" id="IPR003805">
    <property type="entry name" value="CobS"/>
</dbReference>
<dbReference type="NCBIfam" id="TIGR00317">
    <property type="entry name" value="cobS"/>
    <property type="match status" value="1"/>
</dbReference>
<dbReference type="NCBIfam" id="NF001276">
    <property type="entry name" value="PRK00235.1-2"/>
    <property type="match status" value="1"/>
</dbReference>
<dbReference type="PANTHER" id="PTHR34148">
    <property type="entry name" value="ADENOSYLCOBINAMIDE-GDP RIBAZOLETRANSFERASE"/>
    <property type="match status" value="1"/>
</dbReference>
<dbReference type="PANTHER" id="PTHR34148:SF1">
    <property type="entry name" value="ADENOSYLCOBINAMIDE-GDP RIBAZOLETRANSFERASE"/>
    <property type="match status" value="1"/>
</dbReference>
<dbReference type="Pfam" id="PF02654">
    <property type="entry name" value="CobS"/>
    <property type="match status" value="1"/>
</dbReference>
<keyword id="KW-0997">Cell inner membrane</keyword>
<keyword id="KW-1003">Cell membrane</keyword>
<keyword id="KW-0169">Cobalamin biosynthesis</keyword>
<keyword id="KW-0460">Magnesium</keyword>
<keyword id="KW-0472">Membrane</keyword>
<keyword id="KW-0808">Transferase</keyword>
<keyword id="KW-0812">Transmembrane</keyword>
<keyword id="KW-1133">Transmembrane helix</keyword>
<gene>
    <name type="primary">cobV</name>
</gene>
<reference key="1">
    <citation type="journal article" date="1991" name="J. Bacteriol.">
        <title>Genetic analysis, nucleotide sequence, and products of two Pseudomonas denitrificans cob genes encoding nicotinate-nucleotide: dimethylbenzimidazole phosphoribosyltransferase and cobalamin (5'-phosphate) synthase.</title>
        <authorList>
            <person name="Cameron B."/>
            <person name="Blanche F."/>
            <person name="Rouyez M.-C."/>
            <person name="Bisch D."/>
            <person name="Famechon A."/>
            <person name="Couder M."/>
            <person name="Cauchois L."/>
            <person name="Thibaut D."/>
            <person name="Debussche L."/>
            <person name="Crouzet J."/>
        </authorList>
    </citation>
    <scope>NUCLEOTIDE SEQUENCE [GENOMIC DNA]</scope>
    <scope>FUNCTION</scope>
    <scope>CATALYTIC ACTIVITY</scope>
    <scope>COFACTOR</scope>
    <scope>BIOPHYSICOCHEMICAL PROPERTIES</scope>
    <source>
        <strain>SC510</strain>
    </source>
</reference>
<protein>
    <recommendedName>
        <fullName>Adenosylcobinamide-GDP ribazoletransferase</fullName>
        <ecNumber>2.7.8.26</ecNumber>
    </recommendedName>
    <alternativeName>
        <fullName>Cobalamin synthase</fullName>
    </alternativeName>
    <alternativeName>
        <fullName>Cobalamin-5'-phosphate synthase</fullName>
    </alternativeName>
</protein>